<organism>
    <name type="scientific">Escherichia coli O81 (strain ED1a)</name>
    <dbReference type="NCBI Taxonomy" id="585397"/>
    <lineage>
        <taxon>Bacteria</taxon>
        <taxon>Pseudomonadati</taxon>
        <taxon>Pseudomonadota</taxon>
        <taxon>Gammaproteobacteria</taxon>
        <taxon>Enterobacterales</taxon>
        <taxon>Enterobacteriaceae</taxon>
        <taxon>Escherichia</taxon>
    </lineage>
</organism>
<gene>
    <name evidence="1" type="primary">thiI</name>
    <name type="ordered locus">ECED1_0446</name>
</gene>
<keyword id="KW-0067">ATP-binding</keyword>
<keyword id="KW-0963">Cytoplasm</keyword>
<keyword id="KW-1015">Disulfide bond</keyword>
<keyword id="KW-0547">Nucleotide-binding</keyword>
<keyword id="KW-0676">Redox-active center</keyword>
<keyword id="KW-0694">RNA-binding</keyword>
<keyword id="KW-0784">Thiamine biosynthesis</keyword>
<keyword id="KW-0808">Transferase</keyword>
<keyword id="KW-0820">tRNA-binding</keyword>
<reference key="1">
    <citation type="journal article" date="2009" name="PLoS Genet.">
        <title>Organised genome dynamics in the Escherichia coli species results in highly diverse adaptive paths.</title>
        <authorList>
            <person name="Touchon M."/>
            <person name="Hoede C."/>
            <person name="Tenaillon O."/>
            <person name="Barbe V."/>
            <person name="Baeriswyl S."/>
            <person name="Bidet P."/>
            <person name="Bingen E."/>
            <person name="Bonacorsi S."/>
            <person name="Bouchier C."/>
            <person name="Bouvet O."/>
            <person name="Calteau A."/>
            <person name="Chiapello H."/>
            <person name="Clermont O."/>
            <person name="Cruveiller S."/>
            <person name="Danchin A."/>
            <person name="Diard M."/>
            <person name="Dossat C."/>
            <person name="Karoui M.E."/>
            <person name="Frapy E."/>
            <person name="Garry L."/>
            <person name="Ghigo J.M."/>
            <person name="Gilles A.M."/>
            <person name="Johnson J."/>
            <person name="Le Bouguenec C."/>
            <person name="Lescat M."/>
            <person name="Mangenot S."/>
            <person name="Martinez-Jehanne V."/>
            <person name="Matic I."/>
            <person name="Nassif X."/>
            <person name="Oztas S."/>
            <person name="Petit M.A."/>
            <person name="Pichon C."/>
            <person name="Rouy Z."/>
            <person name="Ruf C.S."/>
            <person name="Schneider D."/>
            <person name="Tourret J."/>
            <person name="Vacherie B."/>
            <person name="Vallenet D."/>
            <person name="Medigue C."/>
            <person name="Rocha E.P.C."/>
            <person name="Denamur E."/>
        </authorList>
    </citation>
    <scope>NUCLEOTIDE SEQUENCE [LARGE SCALE GENOMIC DNA]</scope>
    <source>
        <strain>ED1a</strain>
    </source>
</reference>
<feature type="chain" id="PRO_1000196926" description="tRNA sulfurtransferase">
    <location>
        <begin position="1"/>
        <end position="482"/>
    </location>
</feature>
<feature type="domain" description="THUMP" evidence="1">
    <location>
        <begin position="61"/>
        <end position="165"/>
    </location>
</feature>
<feature type="domain" description="Rhodanese" evidence="1">
    <location>
        <begin position="404"/>
        <end position="482"/>
    </location>
</feature>
<feature type="active site" description="Cysteine persulfide intermediate" evidence="1">
    <location>
        <position position="456"/>
    </location>
</feature>
<feature type="binding site" evidence="1">
    <location>
        <begin position="183"/>
        <end position="184"/>
    </location>
    <ligand>
        <name>ATP</name>
        <dbReference type="ChEBI" id="CHEBI:30616"/>
    </ligand>
</feature>
<feature type="binding site" evidence="1">
    <location>
        <position position="265"/>
    </location>
    <ligand>
        <name>ATP</name>
        <dbReference type="ChEBI" id="CHEBI:30616"/>
    </ligand>
</feature>
<feature type="binding site" evidence="1">
    <location>
        <position position="287"/>
    </location>
    <ligand>
        <name>ATP</name>
        <dbReference type="ChEBI" id="CHEBI:30616"/>
    </ligand>
</feature>
<feature type="binding site" evidence="1">
    <location>
        <position position="296"/>
    </location>
    <ligand>
        <name>ATP</name>
        <dbReference type="ChEBI" id="CHEBI:30616"/>
    </ligand>
</feature>
<feature type="disulfide bond" description="Redox-active" evidence="1">
    <location>
        <begin position="344"/>
        <end position="456"/>
    </location>
</feature>
<accession>B7MQD8</accession>
<proteinExistence type="inferred from homology"/>
<dbReference type="EC" id="2.8.1.4" evidence="1"/>
<dbReference type="EMBL" id="CU928162">
    <property type="protein sequence ID" value="CAR06656.1"/>
    <property type="molecule type" value="Genomic_DNA"/>
</dbReference>
<dbReference type="RefSeq" id="WP_000668687.1">
    <property type="nucleotide sequence ID" value="NC_011745.1"/>
</dbReference>
<dbReference type="SMR" id="B7MQD8"/>
<dbReference type="KEGG" id="ecq:ECED1_0446"/>
<dbReference type="HOGENOM" id="CLU_037952_4_1_6"/>
<dbReference type="UniPathway" id="UPA00060"/>
<dbReference type="Proteomes" id="UP000000748">
    <property type="component" value="Chromosome"/>
</dbReference>
<dbReference type="GO" id="GO:0005829">
    <property type="term" value="C:cytosol"/>
    <property type="evidence" value="ECO:0007669"/>
    <property type="project" value="TreeGrafter"/>
</dbReference>
<dbReference type="GO" id="GO:0005524">
    <property type="term" value="F:ATP binding"/>
    <property type="evidence" value="ECO:0007669"/>
    <property type="project" value="UniProtKB-UniRule"/>
</dbReference>
<dbReference type="GO" id="GO:0004810">
    <property type="term" value="F:CCA tRNA nucleotidyltransferase activity"/>
    <property type="evidence" value="ECO:0007669"/>
    <property type="project" value="InterPro"/>
</dbReference>
<dbReference type="GO" id="GO:0000049">
    <property type="term" value="F:tRNA binding"/>
    <property type="evidence" value="ECO:0007669"/>
    <property type="project" value="UniProtKB-UniRule"/>
</dbReference>
<dbReference type="GO" id="GO:0140741">
    <property type="term" value="F:tRNA-uracil-4 sulfurtransferase activity"/>
    <property type="evidence" value="ECO:0007669"/>
    <property type="project" value="UniProtKB-EC"/>
</dbReference>
<dbReference type="GO" id="GO:0009228">
    <property type="term" value="P:thiamine biosynthetic process"/>
    <property type="evidence" value="ECO:0007669"/>
    <property type="project" value="UniProtKB-KW"/>
</dbReference>
<dbReference type="GO" id="GO:0009229">
    <property type="term" value="P:thiamine diphosphate biosynthetic process"/>
    <property type="evidence" value="ECO:0007669"/>
    <property type="project" value="UniProtKB-UniRule"/>
</dbReference>
<dbReference type="GO" id="GO:0052837">
    <property type="term" value="P:thiazole biosynthetic process"/>
    <property type="evidence" value="ECO:0007669"/>
    <property type="project" value="InterPro"/>
</dbReference>
<dbReference type="GO" id="GO:0002937">
    <property type="term" value="P:tRNA 4-thiouridine biosynthesis"/>
    <property type="evidence" value="ECO:0007669"/>
    <property type="project" value="TreeGrafter"/>
</dbReference>
<dbReference type="CDD" id="cd01712">
    <property type="entry name" value="PPase_ThiI"/>
    <property type="match status" value="1"/>
</dbReference>
<dbReference type="CDD" id="cd00158">
    <property type="entry name" value="RHOD"/>
    <property type="match status" value="1"/>
</dbReference>
<dbReference type="CDD" id="cd11716">
    <property type="entry name" value="THUMP_ThiI"/>
    <property type="match status" value="1"/>
</dbReference>
<dbReference type="FunFam" id="3.30.2130.30:FF:000002">
    <property type="entry name" value="tRNA sulfurtransferase"/>
    <property type="match status" value="1"/>
</dbReference>
<dbReference type="FunFam" id="3.40.250.10:FF:000003">
    <property type="entry name" value="tRNA sulfurtransferase"/>
    <property type="match status" value="1"/>
</dbReference>
<dbReference type="FunFam" id="3.40.50.620:FF:000029">
    <property type="entry name" value="tRNA sulfurtransferase"/>
    <property type="match status" value="1"/>
</dbReference>
<dbReference type="Gene3D" id="3.30.2130.30">
    <property type="match status" value="1"/>
</dbReference>
<dbReference type="Gene3D" id="3.40.50.620">
    <property type="entry name" value="HUPs"/>
    <property type="match status" value="1"/>
</dbReference>
<dbReference type="Gene3D" id="3.40.250.10">
    <property type="entry name" value="Rhodanese-like domain"/>
    <property type="match status" value="1"/>
</dbReference>
<dbReference type="HAMAP" id="MF_00021">
    <property type="entry name" value="ThiI"/>
    <property type="match status" value="1"/>
</dbReference>
<dbReference type="InterPro" id="IPR001763">
    <property type="entry name" value="Rhodanese-like_dom"/>
</dbReference>
<dbReference type="InterPro" id="IPR036873">
    <property type="entry name" value="Rhodanese-like_dom_sf"/>
</dbReference>
<dbReference type="InterPro" id="IPR014729">
    <property type="entry name" value="Rossmann-like_a/b/a_fold"/>
</dbReference>
<dbReference type="InterPro" id="IPR020536">
    <property type="entry name" value="ThiI_AANH"/>
</dbReference>
<dbReference type="InterPro" id="IPR054173">
    <property type="entry name" value="ThiI_fer"/>
</dbReference>
<dbReference type="InterPro" id="IPR049961">
    <property type="entry name" value="ThiI_N"/>
</dbReference>
<dbReference type="InterPro" id="IPR026340">
    <property type="entry name" value="THII_Thiazole_biosynth_dom"/>
</dbReference>
<dbReference type="InterPro" id="IPR004114">
    <property type="entry name" value="THUMP_dom"/>
</dbReference>
<dbReference type="InterPro" id="IPR049962">
    <property type="entry name" value="THUMP_ThiI"/>
</dbReference>
<dbReference type="InterPro" id="IPR003720">
    <property type="entry name" value="tRNA_STrfase"/>
</dbReference>
<dbReference type="InterPro" id="IPR050102">
    <property type="entry name" value="tRNA_sulfurtransferase_ThiI"/>
</dbReference>
<dbReference type="NCBIfam" id="TIGR04271">
    <property type="entry name" value="ThiI_C_thiazole"/>
    <property type="match status" value="1"/>
</dbReference>
<dbReference type="NCBIfam" id="TIGR00342">
    <property type="entry name" value="tRNA uracil 4-sulfurtransferase ThiI"/>
    <property type="match status" value="1"/>
</dbReference>
<dbReference type="PANTHER" id="PTHR43209">
    <property type="entry name" value="TRNA SULFURTRANSFERASE"/>
    <property type="match status" value="1"/>
</dbReference>
<dbReference type="PANTHER" id="PTHR43209:SF1">
    <property type="entry name" value="TRNA SULFURTRANSFERASE"/>
    <property type="match status" value="1"/>
</dbReference>
<dbReference type="Pfam" id="PF02568">
    <property type="entry name" value="ThiI"/>
    <property type="match status" value="1"/>
</dbReference>
<dbReference type="Pfam" id="PF22025">
    <property type="entry name" value="ThiI_fer"/>
    <property type="match status" value="1"/>
</dbReference>
<dbReference type="Pfam" id="PF02926">
    <property type="entry name" value="THUMP"/>
    <property type="match status" value="1"/>
</dbReference>
<dbReference type="SMART" id="SM00981">
    <property type="entry name" value="THUMP"/>
    <property type="match status" value="1"/>
</dbReference>
<dbReference type="SUPFAM" id="SSF52402">
    <property type="entry name" value="Adenine nucleotide alpha hydrolases-like"/>
    <property type="match status" value="1"/>
</dbReference>
<dbReference type="SUPFAM" id="SSF52821">
    <property type="entry name" value="Rhodanese/Cell cycle control phosphatase"/>
    <property type="match status" value="1"/>
</dbReference>
<dbReference type="SUPFAM" id="SSF143437">
    <property type="entry name" value="THUMP domain-like"/>
    <property type="match status" value="1"/>
</dbReference>
<dbReference type="PROSITE" id="PS50206">
    <property type="entry name" value="RHODANESE_3"/>
    <property type="match status" value="1"/>
</dbReference>
<dbReference type="PROSITE" id="PS51165">
    <property type="entry name" value="THUMP"/>
    <property type="match status" value="1"/>
</dbReference>
<protein>
    <recommendedName>
        <fullName evidence="1">tRNA sulfurtransferase</fullName>
        <ecNumber evidence="1">2.8.1.4</ecNumber>
    </recommendedName>
    <alternativeName>
        <fullName evidence="1">Sulfur carrier protein ThiS sulfurtransferase</fullName>
    </alternativeName>
    <alternativeName>
        <fullName evidence="1">Thiamine biosynthesis protein ThiI</fullName>
    </alternativeName>
    <alternativeName>
        <fullName evidence="1">tRNA 4-thiouridine synthase</fullName>
    </alternativeName>
</protein>
<name>THII_ECO81</name>
<evidence type="ECO:0000255" key="1">
    <source>
        <dbReference type="HAMAP-Rule" id="MF_00021"/>
    </source>
</evidence>
<comment type="function">
    <text evidence="1">Catalyzes the ATP-dependent transfer of a sulfur to tRNA to produce 4-thiouridine in position 8 of tRNAs, which functions as a near-UV photosensor. Also catalyzes the transfer of sulfur to the sulfur carrier protein ThiS, forming ThiS-thiocarboxylate. This is a step in the synthesis of thiazole, in the thiamine biosynthesis pathway. The sulfur is donated as persulfide by IscS.</text>
</comment>
<comment type="catalytic activity">
    <reaction evidence="1">
        <text>[ThiI sulfur-carrier protein]-S-sulfanyl-L-cysteine + a uridine in tRNA + 2 reduced [2Fe-2S]-[ferredoxin] + ATP + H(+) = [ThiI sulfur-carrier protein]-L-cysteine + a 4-thiouridine in tRNA + 2 oxidized [2Fe-2S]-[ferredoxin] + AMP + diphosphate</text>
        <dbReference type="Rhea" id="RHEA:24176"/>
        <dbReference type="Rhea" id="RHEA-COMP:10000"/>
        <dbReference type="Rhea" id="RHEA-COMP:10001"/>
        <dbReference type="Rhea" id="RHEA-COMP:13337"/>
        <dbReference type="Rhea" id="RHEA-COMP:13338"/>
        <dbReference type="Rhea" id="RHEA-COMP:13339"/>
        <dbReference type="Rhea" id="RHEA-COMP:13340"/>
        <dbReference type="ChEBI" id="CHEBI:15378"/>
        <dbReference type="ChEBI" id="CHEBI:29950"/>
        <dbReference type="ChEBI" id="CHEBI:30616"/>
        <dbReference type="ChEBI" id="CHEBI:33019"/>
        <dbReference type="ChEBI" id="CHEBI:33737"/>
        <dbReference type="ChEBI" id="CHEBI:33738"/>
        <dbReference type="ChEBI" id="CHEBI:61963"/>
        <dbReference type="ChEBI" id="CHEBI:65315"/>
        <dbReference type="ChEBI" id="CHEBI:136798"/>
        <dbReference type="ChEBI" id="CHEBI:456215"/>
        <dbReference type="EC" id="2.8.1.4"/>
    </reaction>
</comment>
<comment type="catalytic activity">
    <reaction evidence="1">
        <text>[ThiS sulfur-carrier protein]-C-terminal Gly-Gly-AMP + S-sulfanyl-L-cysteinyl-[cysteine desulfurase] + AH2 = [ThiS sulfur-carrier protein]-C-terminal-Gly-aminoethanethioate + L-cysteinyl-[cysteine desulfurase] + A + AMP + 2 H(+)</text>
        <dbReference type="Rhea" id="RHEA:43340"/>
        <dbReference type="Rhea" id="RHEA-COMP:12157"/>
        <dbReference type="Rhea" id="RHEA-COMP:12158"/>
        <dbReference type="Rhea" id="RHEA-COMP:12910"/>
        <dbReference type="Rhea" id="RHEA-COMP:19908"/>
        <dbReference type="ChEBI" id="CHEBI:13193"/>
        <dbReference type="ChEBI" id="CHEBI:15378"/>
        <dbReference type="ChEBI" id="CHEBI:17499"/>
        <dbReference type="ChEBI" id="CHEBI:29950"/>
        <dbReference type="ChEBI" id="CHEBI:61963"/>
        <dbReference type="ChEBI" id="CHEBI:90618"/>
        <dbReference type="ChEBI" id="CHEBI:232372"/>
        <dbReference type="ChEBI" id="CHEBI:456215"/>
    </reaction>
</comment>
<comment type="pathway">
    <text evidence="1">Cofactor biosynthesis; thiamine diphosphate biosynthesis.</text>
</comment>
<comment type="subcellular location">
    <subcellularLocation>
        <location evidence="1">Cytoplasm</location>
    </subcellularLocation>
</comment>
<comment type="similarity">
    <text evidence="1">Belongs to the ThiI family.</text>
</comment>
<sequence>MKFIIKLFPEITIKSQSVRLRFIKILTGNIRNVLKHYDETLAVVRHWDNIEVRAKDENQRLAIRDALTRIPGIHHILEVEDVPFTDMHDIFEKALVQYRDQLEGKTFCVRVKRRGKHDFSSIDVERYVGGGLNQHIESARVKLTNPEVTVHLEVEDDRLLLIKGRYEGIGGFPIGTQEDVLSLISGGFDSGVSSYMLMRRGCRVHYCFFNLGGAAHEIGVRQVAHYLWNRFGSSHRVRFVAINFEPVVGEILEKIDDGQMGVILKRMMVRAASKVAERYGVQALVTGEALGQVSSQTLTNLRLIDNVSDTLILRPLISYDKEHIINLARQIGTEDFARTMPEYCGVISKSPTVKAVKSKIEAEEEKFDFSILDKVVEEANNVDIREIAQQTEQEVVEVETVNGFGPNDVILDIRSIDEQEDKPLKVEGIDVVSLPFYKLSTKFGDLDQSKTWLLWCERGVMSRLQALYLREQGFNNVKVYRP</sequence>